<comment type="function">
    <text evidence="1">May play a role in vesicular transport from endoplasmic reticulum to Golgi.</text>
</comment>
<comment type="subunit">
    <text evidence="1">Component of the multisubunit TRAPP (transport protein particle) complex, which includes at least TRAPPC2, TRAPPC2L, TRAPPC3, TRAPPC3L, TRAPPC4, TRAPPC5, TRAPPC8, TRAPPC9, TRAPPC10, TRAPPC11 and TRAPPC12. Interacts with the heterodimer TRAPPC3-TRAPPC6A (By similarity).</text>
</comment>
<comment type="subcellular location">
    <subcellularLocation>
        <location evidence="1">Cytoplasm</location>
        <location evidence="1">Perinuclear region</location>
    </subcellularLocation>
    <subcellularLocation>
        <location evidence="1">Endoplasmic reticulum</location>
    </subcellularLocation>
    <subcellularLocation>
        <location evidence="1">Golgi apparatus</location>
    </subcellularLocation>
</comment>
<comment type="similarity">
    <text evidence="2">Belongs to the TRAPP small subunits family. Sedlin subfamily.</text>
</comment>
<organism>
    <name type="scientific">Rattus norvegicus</name>
    <name type="common">Rat</name>
    <dbReference type="NCBI Taxonomy" id="10116"/>
    <lineage>
        <taxon>Eukaryota</taxon>
        <taxon>Metazoa</taxon>
        <taxon>Chordata</taxon>
        <taxon>Craniata</taxon>
        <taxon>Vertebrata</taxon>
        <taxon>Euteleostomi</taxon>
        <taxon>Mammalia</taxon>
        <taxon>Eutheria</taxon>
        <taxon>Euarchontoglires</taxon>
        <taxon>Glires</taxon>
        <taxon>Rodentia</taxon>
        <taxon>Myomorpha</taxon>
        <taxon>Muroidea</taxon>
        <taxon>Muridae</taxon>
        <taxon>Murinae</taxon>
        <taxon>Rattus</taxon>
    </lineage>
</organism>
<accession>B2RYU6</accession>
<name>TPC2L_RAT</name>
<feature type="chain" id="PRO_0000379774" description="Trafficking protein particle complex subunit 2-like protein">
    <location>
        <begin position="1"/>
        <end position="139"/>
    </location>
</feature>
<reference key="1">
    <citation type="submission" date="2005-07" db="EMBL/GenBank/DDBJ databases">
        <authorList>
            <person name="Mural R.J."/>
            <person name="Adams M.D."/>
            <person name="Myers E.W."/>
            <person name="Smith H.O."/>
            <person name="Venter J.C."/>
        </authorList>
    </citation>
    <scope>NUCLEOTIDE SEQUENCE [LARGE SCALE GENOMIC DNA]</scope>
    <source>
        <strain>Brown Norway</strain>
    </source>
</reference>
<reference key="2">
    <citation type="journal article" date="2004" name="Genome Res.">
        <title>The status, quality, and expansion of the NIH full-length cDNA project: the Mammalian Gene Collection (MGC).</title>
        <authorList>
            <consortium name="The MGC Project Team"/>
        </authorList>
    </citation>
    <scope>NUCLEOTIDE SEQUENCE [LARGE SCALE MRNA]</scope>
    <source>
        <tissue>Pituitary</tissue>
    </source>
</reference>
<protein>
    <recommendedName>
        <fullName>Trafficking protein particle complex subunit 2-like protein</fullName>
    </recommendedName>
</protein>
<evidence type="ECO:0000250" key="1"/>
<evidence type="ECO:0000305" key="2"/>
<proteinExistence type="evidence at transcript level"/>
<sequence>MAVCIAVIAKENYPLYIRSTPTENELKFHYMVHTSLDVVDEKISAMGKALVDQRELYLGLLYPTEDYKVYGYVTNSKVKFVMVVDSSNTALRDNEIRSMFRKLHNSYTDVMCNPFYNPGDRIQSRAFDTMVTSMMVQVC</sequence>
<dbReference type="EMBL" id="CH473972">
    <property type="protein sequence ID" value="EDL92762.1"/>
    <property type="molecule type" value="Genomic_DNA"/>
</dbReference>
<dbReference type="EMBL" id="BC166907">
    <property type="protein sequence ID" value="AAI66907.1"/>
    <property type="molecule type" value="mRNA"/>
</dbReference>
<dbReference type="EMBL" id="BC166917">
    <property type="protein sequence ID" value="AAI66917.1"/>
    <property type="molecule type" value="mRNA"/>
</dbReference>
<dbReference type="EMBL" id="BC168734">
    <property type="protein sequence ID" value="AAI68734.1"/>
    <property type="molecule type" value="mRNA"/>
</dbReference>
<dbReference type="RefSeq" id="NP_001099663.1">
    <property type="nucleotide sequence ID" value="NM_001106193.1"/>
</dbReference>
<dbReference type="SMR" id="B2RYU6"/>
<dbReference type="FunCoup" id="B2RYU6">
    <property type="interactions" value="1558"/>
</dbReference>
<dbReference type="STRING" id="10116.ENSRNOP00000019740"/>
<dbReference type="PhosphoSitePlus" id="B2RYU6"/>
<dbReference type="jPOST" id="B2RYU6"/>
<dbReference type="PaxDb" id="10116-ENSRNOP00000019740"/>
<dbReference type="PeptideAtlas" id="B2RYU6"/>
<dbReference type="Ensembl" id="ENSRNOT00000019740.6">
    <property type="protein sequence ID" value="ENSRNOP00000019740.5"/>
    <property type="gene ID" value="ENSRNOG00000014581.6"/>
</dbReference>
<dbReference type="GeneID" id="292074"/>
<dbReference type="KEGG" id="rno:292074"/>
<dbReference type="UCSC" id="RGD:1304906">
    <property type="organism name" value="rat"/>
</dbReference>
<dbReference type="AGR" id="RGD:1304906"/>
<dbReference type="CTD" id="51693"/>
<dbReference type="RGD" id="1304906">
    <property type="gene designation" value="Trappc2l"/>
</dbReference>
<dbReference type="eggNOG" id="KOG3444">
    <property type="taxonomic scope" value="Eukaryota"/>
</dbReference>
<dbReference type="GeneTree" id="ENSGT00510000047505"/>
<dbReference type="HOGENOM" id="CLU_085828_2_3_1"/>
<dbReference type="InParanoid" id="B2RYU6"/>
<dbReference type="OrthoDB" id="17287at9989"/>
<dbReference type="PhylomeDB" id="B2RYU6"/>
<dbReference type="TreeFam" id="TF323920"/>
<dbReference type="Reactome" id="R-RNO-204005">
    <property type="pathway name" value="COPII-mediated vesicle transport"/>
</dbReference>
<dbReference type="Reactome" id="R-RNO-8876198">
    <property type="pathway name" value="RAB GEFs exchange GTP for GDP on RABs"/>
</dbReference>
<dbReference type="PRO" id="PR:B2RYU6"/>
<dbReference type="Proteomes" id="UP000002494">
    <property type="component" value="Chromosome 19"/>
</dbReference>
<dbReference type="Proteomes" id="UP000234681">
    <property type="component" value="Chromosome 19"/>
</dbReference>
<dbReference type="Bgee" id="ENSRNOG00000014581">
    <property type="expression patterns" value="Expressed in pancreas and 19 other cell types or tissues"/>
</dbReference>
<dbReference type="GO" id="GO:0005737">
    <property type="term" value="C:cytoplasm"/>
    <property type="evidence" value="ECO:0000318"/>
    <property type="project" value="GO_Central"/>
</dbReference>
<dbReference type="GO" id="GO:0005783">
    <property type="term" value="C:endoplasmic reticulum"/>
    <property type="evidence" value="ECO:0007669"/>
    <property type="project" value="UniProtKB-SubCell"/>
</dbReference>
<dbReference type="GO" id="GO:0005794">
    <property type="term" value="C:Golgi apparatus"/>
    <property type="evidence" value="ECO:0007669"/>
    <property type="project" value="UniProtKB-SubCell"/>
</dbReference>
<dbReference type="GO" id="GO:0005634">
    <property type="term" value="C:nucleus"/>
    <property type="evidence" value="ECO:0000318"/>
    <property type="project" value="GO_Central"/>
</dbReference>
<dbReference type="GO" id="GO:0048471">
    <property type="term" value="C:perinuclear region of cytoplasm"/>
    <property type="evidence" value="ECO:0007669"/>
    <property type="project" value="UniProtKB-SubCell"/>
</dbReference>
<dbReference type="GO" id="GO:0030008">
    <property type="term" value="C:TRAPP complex"/>
    <property type="evidence" value="ECO:0000266"/>
    <property type="project" value="RGD"/>
</dbReference>
<dbReference type="GO" id="GO:0006888">
    <property type="term" value="P:endoplasmic reticulum to Golgi vesicle-mediated transport"/>
    <property type="evidence" value="ECO:0000318"/>
    <property type="project" value="GO_Central"/>
</dbReference>
<dbReference type="CDD" id="cd14854">
    <property type="entry name" value="TRAPPC2L"/>
    <property type="match status" value="1"/>
</dbReference>
<dbReference type="FunFam" id="3.30.450.70:FF:000005">
    <property type="entry name" value="Trafficking protein particle complex subunit 2-like protein"/>
    <property type="match status" value="1"/>
</dbReference>
<dbReference type="Gene3D" id="3.30.450.70">
    <property type="match status" value="1"/>
</dbReference>
<dbReference type="InterPro" id="IPR011012">
    <property type="entry name" value="Longin-like_dom_sf"/>
</dbReference>
<dbReference type="InterPro" id="IPR006722">
    <property type="entry name" value="Sedlin"/>
</dbReference>
<dbReference type="InterPro" id="IPR007233">
    <property type="entry name" value="TRAPPC"/>
</dbReference>
<dbReference type="InterPro" id="IPR044760">
    <property type="entry name" value="TRAPPC2L"/>
</dbReference>
<dbReference type="PANTHER" id="PTHR12403">
    <property type="entry name" value="TRAFFICKING PROTEIN PARTICLE COMPLEX SUBUNIT 2"/>
    <property type="match status" value="1"/>
</dbReference>
<dbReference type="Pfam" id="PF04628">
    <property type="entry name" value="Sedlin_N"/>
    <property type="match status" value="1"/>
</dbReference>
<dbReference type="SMART" id="SM01399">
    <property type="entry name" value="Sybindin"/>
    <property type="match status" value="1"/>
</dbReference>
<dbReference type="SUPFAM" id="SSF64356">
    <property type="entry name" value="SNARE-like"/>
    <property type="match status" value="1"/>
</dbReference>
<keyword id="KW-0963">Cytoplasm</keyword>
<keyword id="KW-0256">Endoplasmic reticulum</keyword>
<keyword id="KW-0931">ER-Golgi transport</keyword>
<keyword id="KW-0333">Golgi apparatus</keyword>
<keyword id="KW-1185">Reference proteome</keyword>
<keyword id="KW-0813">Transport</keyword>
<gene>
    <name type="primary">Trappc2l</name>
</gene>